<comment type="function">
    <text evidence="1">DNA-binding protein that preferentially recognizes a curved DNA sequence. It is probably a functional analog of DnaJ; displays overlapping activities with DnaJ, but functions under different conditions, probably acting as a molecular chaperone in an adaptive response to environmental stresses other than heat shock. Lacks autonomous chaperone activity; binds native substrates and targets them for recognition by DnaK. Its activity is inhibited by the binding of CbpM.</text>
</comment>
<comment type="subcellular location">
    <subcellularLocation>
        <location evidence="1">Cytoplasm</location>
        <location evidence="1">Nucleoid</location>
    </subcellularLocation>
</comment>
<dbReference type="EMBL" id="AE005174">
    <property type="protein sequence ID" value="AAG55547.1"/>
    <property type="molecule type" value="Genomic_DNA"/>
</dbReference>
<dbReference type="EMBL" id="BA000007">
    <property type="protein sequence ID" value="BAB34578.1"/>
    <property type="molecule type" value="Genomic_DNA"/>
</dbReference>
<dbReference type="PIR" id="C90773">
    <property type="entry name" value="C90773"/>
</dbReference>
<dbReference type="PIR" id="G85635">
    <property type="entry name" value="G85635"/>
</dbReference>
<dbReference type="RefSeq" id="NP_309182.1">
    <property type="nucleotide sequence ID" value="NC_002695.1"/>
</dbReference>
<dbReference type="RefSeq" id="WP_000420639.1">
    <property type="nucleotide sequence ID" value="NZ_VOAI01000025.1"/>
</dbReference>
<dbReference type="SMR" id="Q7AFV7"/>
<dbReference type="STRING" id="155864.Z1418"/>
<dbReference type="GeneID" id="913525"/>
<dbReference type="KEGG" id="ece:Z1418"/>
<dbReference type="KEGG" id="ecs:ECs_1155"/>
<dbReference type="PATRIC" id="fig|386585.9.peg.1271"/>
<dbReference type="eggNOG" id="COG0484">
    <property type="taxonomic scope" value="Bacteria"/>
</dbReference>
<dbReference type="HOGENOM" id="CLU_017633_0_0_6"/>
<dbReference type="OMA" id="FAGRDFY"/>
<dbReference type="Proteomes" id="UP000000558">
    <property type="component" value="Chromosome"/>
</dbReference>
<dbReference type="Proteomes" id="UP000002519">
    <property type="component" value="Chromosome"/>
</dbReference>
<dbReference type="GO" id="GO:0005737">
    <property type="term" value="C:cytoplasm"/>
    <property type="evidence" value="ECO:0007669"/>
    <property type="project" value="UniProtKB-UniRule"/>
</dbReference>
<dbReference type="GO" id="GO:0009295">
    <property type="term" value="C:nucleoid"/>
    <property type="evidence" value="ECO:0007669"/>
    <property type="project" value="UniProtKB-SubCell"/>
</dbReference>
<dbReference type="GO" id="GO:0003681">
    <property type="term" value="F:bent DNA binding"/>
    <property type="evidence" value="ECO:0007669"/>
    <property type="project" value="UniProtKB-UniRule"/>
</dbReference>
<dbReference type="GO" id="GO:0051082">
    <property type="term" value="F:unfolded protein binding"/>
    <property type="evidence" value="ECO:0007669"/>
    <property type="project" value="InterPro"/>
</dbReference>
<dbReference type="GO" id="GO:0051085">
    <property type="term" value="P:chaperone cofactor-dependent protein refolding"/>
    <property type="evidence" value="ECO:0007669"/>
    <property type="project" value="TreeGrafter"/>
</dbReference>
<dbReference type="GO" id="GO:0042026">
    <property type="term" value="P:protein refolding"/>
    <property type="evidence" value="ECO:0007669"/>
    <property type="project" value="TreeGrafter"/>
</dbReference>
<dbReference type="CDD" id="cd06257">
    <property type="entry name" value="DnaJ"/>
    <property type="match status" value="1"/>
</dbReference>
<dbReference type="CDD" id="cd10747">
    <property type="entry name" value="DnaJ_C"/>
    <property type="match status" value="1"/>
</dbReference>
<dbReference type="FunFam" id="1.10.287.110:FF:000013">
    <property type="entry name" value="Curved DNA-binding protein"/>
    <property type="match status" value="1"/>
</dbReference>
<dbReference type="FunFam" id="2.60.260.20:FF:000008">
    <property type="entry name" value="Curved DNA-binding protein"/>
    <property type="match status" value="1"/>
</dbReference>
<dbReference type="FunFam" id="2.60.260.20:FF:000010">
    <property type="entry name" value="Curved DNA-binding protein"/>
    <property type="match status" value="1"/>
</dbReference>
<dbReference type="Gene3D" id="1.10.287.110">
    <property type="entry name" value="DnaJ domain"/>
    <property type="match status" value="1"/>
</dbReference>
<dbReference type="Gene3D" id="1.20.5.460">
    <property type="entry name" value="Single helix bin"/>
    <property type="match status" value="1"/>
</dbReference>
<dbReference type="Gene3D" id="2.60.260.20">
    <property type="entry name" value="Urease metallochaperone UreE, N-terminal domain"/>
    <property type="match status" value="2"/>
</dbReference>
<dbReference type="HAMAP" id="MF_01154">
    <property type="entry name" value="CbpA"/>
    <property type="match status" value="1"/>
</dbReference>
<dbReference type="InterPro" id="IPR023859">
    <property type="entry name" value="DNA-bd_curved-DNA"/>
</dbReference>
<dbReference type="InterPro" id="IPR002939">
    <property type="entry name" value="DnaJ_C"/>
</dbReference>
<dbReference type="InterPro" id="IPR001623">
    <property type="entry name" value="DnaJ_domain"/>
</dbReference>
<dbReference type="InterPro" id="IPR018253">
    <property type="entry name" value="DnaJ_domain_CS"/>
</dbReference>
<dbReference type="InterPro" id="IPR008971">
    <property type="entry name" value="HSP40/DnaJ_pept-bd"/>
</dbReference>
<dbReference type="InterPro" id="IPR036869">
    <property type="entry name" value="J_dom_sf"/>
</dbReference>
<dbReference type="NCBIfam" id="NF007618">
    <property type="entry name" value="PRK10266.1"/>
    <property type="match status" value="1"/>
</dbReference>
<dbReference type="PANTHER" id="PTHR43096">
    <property type="entry name" value="DNAJ HOMOLOG 1, MITOCHONDRIAL-RELATED"/>
    <property type="match status" value="1"/>
</dbReference>
<dbReference type="PANTHER" id="PTHR43096:SF52">
    <property type="entry name" value="DNAJ HOMOLOG 1, MITOCHONDRIAL-RELATED"/>
    <property type="match status" value="1"/>
</dbReference>
<dbReference type="Pfam" id="PF00226">
    <property type="entry name" value="DnaJ"/>
    <property type="match status" value="1"/>
</dbReference>
<dbReference type="Pfam" id="PF01556">
    <property type="entry name" value="DnaJ_C"/>
    <property type="match status" value="1"/>
</dbReference>
<dbReference type="PRINTS" id="PR00625">
    <property type="entry name" value="JDOMAIN"/>
</dbReference>
<dbReference type="SMART" id="SM00271">
    <property type="entry name" value="DnaJ"/>
    <property type="match status" value="1"/>
</dbReference>
<dbReference type="SUPFAM" id="SSF46565">
    <property type="entry name" value="Chaperone J-domain"/>
    <property type="match status" value="1"/>
</dbReference>
<dbReference type="SUPFAM" id="SSF49493">
    <property type="entry name" value="HSP40/DnaJ peptide-binding domain"/>
    <property type="match status" value="2"/>
</dbReference>
<dbReference type="PROSITE" id="PS00636">
    <property type="entry name" value="DNAJ_1"/>
    <property type="match status" value="1"/>
</dbReference>
<dbReference type="PROSITE" id="PS50076">
    <property type="entry name" value="DNAJ_2"/>
    <property type="match status" value="1"/>
</dbReference>
<name>CBPA_ECO57</name>
<reference key="1">
    <citation type="journal article" date="2001" name="Nature">
        <title>Genome sequence of enterohaemorrhagic Escherichia coli O157:H7.</title>
        <authorList>
            <person name="Perna N.T."/>
            <person name="Plunkett G. III"/>
            <person name="Burland V."/>
            <person name="Mau B."/>
            <person name="Glasner J.D."/>
            <person name="Rose D.J."/>
            <person name="Mayhew G.F."/>
            <person name="Evans P.S."/>
            <person name="Gregor J."/>
            <person name="Kirkpatrick H.A."/>
            <person name="Posfai G."/>
            <person name="Hackett J."/>
            <person name="Klink S."/>
            <person name="Boutin A."/>
            <person name="Shao Y."/>
            <person name="Miller L."/>
            <person name="Grotbeck E.J."/>
            <person name="Davis N.W."/>
            <person name="Lim A."/>
            <person name="Dimalanta E.T."/>
            <person name="Potamousis K."/>
            <person name="Apodaca J."/>
            <person name="Anantharaman T.S."/>
            <person name="Lin J."/>
            <person name="Yen G."/>
            <person name="Schwartz D.C."/>
            <person name="Welch R.A."/>
            <person name="Blattner F.R."/>
        </authorList>
    </citation>
    <scope>NUCLEOTIDE SEQUENCE [LARGE SCALE GENOMIC DNA]</scope>
    <source>
        <strain>O157:H7 / EDL933 / ATCC 700927 / EHEC</strain>
    </source>
</reference>
<reference key="2">
    <citation type="journal article" date="2001" name="DNA Res.">
        <title>Complete genome sequence of enterohemorrhagic Escherichia coli O157:H7 and genomic comparison with a laboratory strain K-12.</title>
        <authorList>
            <person name="Hayashi T."/>
            <person name="Makino K."/>
            <person name="Ohnishi M."/>
            <person name="Kurokawa K."/>
            <person name="Ishii K."/>
            <person name="Yokoyama K."/>
            <person name="Han C.-G."/>
            <person name="Ohtsubo E."/>
            <person name="Nakayama K."/>
            <person name="Murata T."/>
            <person name="Tanaka M."/>
            <person name="Tobe T."/>
            <person name="Iida T."/>
            <person name="Takami H."/>
            <person name="Honda T."/>
            <person name="Sasakawa C."/>
            <person name="Ogasawara N."/>
            <person name="Yasunaga T."/>
            <person name="Kuhara S."/>
            <person name="Shiba T."/>
            <person name="Hattori M."/>
            <person name="Shinagawa H."/>
        </authorList>
    </citation>
    <scope>NUCLEOTIDE SEQUENCE [LARGE SCALE GENOMIC DNA]</scope>
    <source>
        <strain>O157:H7 / Sakai / RIMD 0509952 / EHEC</strain>
    </source>
</reference>
<organism>
    <name type="scientific">Escherichia coli O157:H7</name>
    <dbReference type="NCBI Taxonomy" id="83334"/>
    <lineage>
        <taxon>Bacteria</taxon>
        <taxon>Pseudomonadati</taxon>
        <taxon>Pseudomonadota</taxon>
        <taxon>Gammaproteobacteria</taxon>
        <taxon>Enterobacterales</taxon>
        <taxon>Enterobacteriaceae</taxon>
        <taxon>Escherichia</taxon>
    </lineage>
</organism>
<sequence>MELKDYYAIMGVKPTDDLKTIKTAYRRLARKYHPDVSKEPDAEARFKEVAEAWEVLSDEQRRAEYDQMWQHRNDPQFSRQFQHGDGQSFNAEDFDDIFSSIFGQHARQSRQRPAARGHDIEIEVAVFLEETLTEHKRTISYNLPVYNAFGMIEQEIPKTLNVKIPAGVGNGQRIRLKGQGTPGENGGPNGDLWLVIHIAPHPLFDIVGQDLEIVVPVSPWEAALGAKVTVPTLKESILLTIPPGSQAGQRLRVKGKGLVSKKQTGDLYAVLKIVMPPKPDENTAALWQQLADAQSSFDPRKDWGKA</sequence>
<keyword id="KW-0143">Chaperone</keyword>
<keyword id="KW-0963">Cytoplasm</keyword>
<keyword id="KW-0238">DNA-binding</keyword>
<keyword id="KW-1185">Reference proteome</keyword>
<protein>
    <recommendedName>
        <fullName evidence="1">Curved DNA-binding protein</fullName>
    </recommendedName>
</protein>
<evidence type="ECO:0000255" key="1">
    <source>
        <dbReference type="HAMAP-Rule" id="MF_01154"/>
    </source>
</evidence>
<accession>Q7AFV7</accession>
<accession>Q8XC03</accession>
<gene>
    <name evidence="1" type="primary">cbpA</name>
    <name type="ordered locus">Z1418</name>
    <name type="ordered locus">ECs1155</name>
</gene>
<proteinExistence type="inferred from homology"/>
<feature type="chain" id="PRO_0000169989" description="Curved DNA-binding protein">
    <location>
        <begin position="1"/>
        <end position="306"/>
    </location>
</feature>
<feature type="domain" description="J" evidence="1">
    <location>
        <begin position="5"/>
        <end position="69"/>
    </location>
</feature>